<gene>
    <name type="primary">ISN1</name>
    <name type="ordered locus">AAR112C</name>
</gene>
<feature type="chain" id="PRO_0000084246" description="IMP-specific 5'-nucleotidase 1">
    <location>
        <begin position="1"/>
        <end position="425"/>
    </location>
</feature>
<feature type="active site" description="Nucleophile" evidence="1">
    <location>
        <position position="144"/>
    </location>
</feature>
<feature type="active site" description="Proton donor" evidence="1">
    <location>
        <position position="146"/>
    </location>
</feature>
<feature type="binding site" evidence="1">
    <location>
        <position position="104"/>
    </location>
    <ligand>
        <name>ATP</name>
        <dbReference type="ChEBI" id="CHEBI:30616"/>
        <note>allosteric activator</note>
    </ligand>
</feature>
<feature type="binding site" evidence="1">
    <location>
        <position position="122"/>
    </location>
    <ligand>
        <name>ATP</name>
        <dbReference type="ChEBI" id="CHEBI:30616"/>
        <note>allosteric activator</note>
    </ligand>
</feature>
<feature type="binding site" evidence="1">
    <location>
        <position position="144"/>
    </location>
    <ligand>
        <name>IMP</name>
        <dbReference type="ChEBI" id="CHEBI:58053"/>
    </ligand>
</feature>
<feature type="binding site" evidence="1">
    <location>
        <position position="144"/>
    </location>
    <ligand>
        <name>Mg(2+)</name>
        <dbReference type="ChEBI" id="CHEBI:18420"/>
    </ligand>
</feature>
<feature type="binding site" evidence="1">
    <location>
        <position position="146"/>
    </location>
    <ligand>
        <name>IMP</name>
        <dbReference type="ChEBI" id="CHEBI:58053"/>
    </ligand>
</feature>
<feature type="binding site" evidence="1">
    <location>
        <position position="146"/>
    </location>
    <ligand>
        <name>Mg(2+)</name>
        <dbReference type="ChEBI" id="CHEBI:18420"/>
    </ligand>
</feature>
<feature type="binding site" evidence="1">
    <location>
        <position position="152"/>
    </location>
    <ligand>
        <name>IMP</name>
        <dbReference type="ChEBI" id="CHEBI:58053"/>
    </ligand>
</feature>
<feature type="binding site" evidence="1">
    <location>
        <position position="180"/>
    </location>
    <ligand>
        <name>IMP</name>
        <dbReference type="ChEBI" id="CHEBI:58053"/>
    </ligand>
</feature>
<feature type="binding site" evidence="1">
    <location>
        <position position="345"/>
    </location>
    <ligand>
        <name>IMP</name>
        <dbReference type="ChEBI" id="CHEBI:58053"/>
    </ligand>
</feature>
<feature type="binding site" evidence="1">
    <location>
        <position position="353"/>
    </location>
    <ligand>
        <name>IMP</name>
        <dbReference type="ChEBI" id="CHEBI:58053"/>
    </ligand>
</feature>
<feature type="binding site" evidence="1">
    <location>
        <position position="380"/>
    </location>
    <ligand>
        <name>Mg(2+)</name>
        <dbReference type="ChEBI" id="CHEBI:18420"/>
    </ligand>
</feature>
<protein>
    <recommendedName>
        <fullName>IMP-specific 5'-nucleotidase 1</fullName>
        <ecNumber evidence="2">3.1.3.99</ecNumber>
    </recommendedName>
</protein>
<accession>Q75EG6</accession>
<evidence type="ECO:0000250" key="1">
    <source>
        <dbReference type="UniProtKB" id="A0A144A134"/>
    </source>
</evidence>
<evidence type="ECO:0000250" key="2">
    <source>
        <dbReference type="UniProtKB" id="Q99312"/>
    </source>
</evidence>
<evidence type="ECO:0000305" key="3"/>
<reference key="1">
    <citation type="journal article" date="2004" name="Science">
        <title>The Ashbya gossypii genome as a tool for mapping the ancient Saccharomyces cerevisiae genome.</title>
        <authorList>
            <person name="Dietrich F.S."/>
            <person name="Voegeli S."/>
            <person name="Brachat S."/>
            <person name="Lerch A."/>
            <person name="Gates K."/>
            <person name="Steiner S."/>
            <person name="Mohr C."/>
            <person name="Poehlmann R."/>
            <person name="Luedi P."/>
            <person name="Choi S."/>
            <person name="Wing R.A."/>
            <person name="Flavier A."/>
            <person name="Gaffney T.D."/>
            <person name="Philippsen P."/>
        </authorList>
    </citation>
    <scope>NUCLEOTIDE SEQUENCE [LARGE SCALE GENOMIC DNA]</scope>
    <source>
        <strain>ATCC 10895 / CBS 109.51 / FGSC 9923 / NRRL Y-1056</strain>
    </source>
</reference>
<reference key="2">
    <citation type="journal article" date="2013" name="G3 (Bethesda)">
        <title>Genomes of Ashbya fungi isolated from insects reveal four mating-type loci, numerous translocations, lack of transposons, and distinct gene duplications.</title>
        <authorList>
            <person name="Dietrich F.S."/>
            <person name="Voegeli S."/>
            <person name="Kuo S."/>
            <person name="Philippsen P."/>
        </authorList>
    </citation>
    <scope>GENOME REANNOTATION</scope>
    <source>
        <strain>ATCC 10895 / CBS 109.51 / FGSC 9923 / NRRL Y-1056</strain>
    </source>
</reference>
<comment type="function">
    <text evidence="2">IMP-specific 5'-nucleotidase involved in IMP (inositol monophosphate) degradation.</text>
</comment>
<comment type="catalytic activity">
    <reaction evidence="2">
        <text>IMP + H2O = inosine + phosphate</text>
        <dbReference type="Rhea" id="RHEA:27718"/>
        <dbReference type="ChEBI" id="CHEBI:15377"/>
        <dbReference type="ChEBI" id="CHEBI:17596"/>
        <dbReference type="ChEBI" id="CHEBI:43474"/>
        <dbReference type="ChEBI" id="CHEBI:58053"/>
        <dbReference type="EC" id="3.1.3.99"/>
    </reaction>
</comment>
<comment type="cofactor">
    <cofactor evidence="2">
        <name>Mg(2+)</name>
        <dbReference type="ChEBI" id="CHEBI:18420"/>
    </cofactor>
</comment>
<comment type="activity regulation">
    <text evidence="1 2">Allosterically activated by ATP (By similarity). ATP binding is a prerequisite to magnesium and substrate binding. ATP binds to 2 of the subunits in the homotetramer inducing a closure of these 2 subunits and the release of the C-terminal loop, thereby activating the enzyme (By similarity).</text>
</comment>
<comment type="subunit">
    <text evidence="2">Homotetramer.</text>
</comment>
<comment type="similarity">
    <text evidence="3">Belongs to the ISN1 family.</text>
</comment>
<keyword id="KW-0067">ATP-binding</keyword>
<keyword id="KW-0378">Hydrolase</keyword>
<keyword id="KW-0460">Magnesium</keyword>
<keyword id="KW-0479">Metal-binding</keyword>
<keyword id="KW-0546">Nucleotide metabolism</keyword>
<keyword id="KW-0547">Nucleotide-binding</keyword>
<keyword id="KW-1185">Reference proteome</keyword>
<dbReference type="EC" id="3.1.3.99" evidence="2"/>
<dbReference type="EMBL" id="AE016814">
    <property type="protein sequence ID" value="AAS50478.1"/>
    <property type="molecule type" value="Genomic_DNA"/>
</dbReference>
<dbReference type="RefSeq" id="NP_982654.1">
    <property type="nucleotide sequence ID" value="NM_208007.1"/>
</dbReference>
<dbReference type="SMR" id="Q75EG6"/>
<dbReference type="FunCoup" id="Q75EG6">
    <property type="interactions" value="100"/>
</dbReference>
<dbReference type="STRING" id="284811.Q75EG6"/>
<dbReference type="EnsemblFungi" id="AAS50478">
    <property type="protein sequence ID" value="AAS50478"/>
    <property type="gene ID" value="AGOS_AAR112C"/>
</dbReference>
<dbReference type="GeneID" id="4618586"/>
<dbReference type="KEGG" id="ago:AGOS_AAR112C"/>
<dbReference type="eggNOG" id="ENOG502QR24">
    <property type="taxonomic scope" value="Eukaryota"/>
</dbReference>
<dbReference type="HOGENOM" id="CLU_031816_1_0_1"/>
<dbReference type="InParanoid" id="Q75EG6"/>
<dbReference type="OMA" id="WGVLACQ"/>
<dbReference type="OrthoDB" id="185373at2759"/>
<dbReference type="Proteomes" id="UP000000591">
    <property type="component" value="Chromosome I"/>
</dbReference>
<dbReference type="GO" id="GO:0005524">
    <property type="term" value="F:ATP binding"/>
    <property type="evidence" value="ECO:0007669"/>
    <property type="project" value="UniProtKB-KW"/>
</dbReference>
<dbReference type="GO" id="GO:0050483">
    <property type="term" value="F:IMP 5'-nucleotidase activity"/>
    <property type="evidence" value="ECO:0000318"/>
    <property type="project" value="GO_Central"/>
</dbReference>
<dbReference type="GO" id="GO:0000287">
    <property type="term" value="F:magnesium ion binding"/>
    <property type="evidence" value="ECO:0007669"/>
    <property type="project" value="InterPro"/>
</dbReference>
<dbReference type="GO" id="GO:0006190">
    <property type="term" value="P:inosine salvage"/>
    <property type="evidence" value="ECO:0000318"/>
    <property type="project" value="GO_Central"/>
</dbReference>
<dbReference type="GO" id="GO:0071590">
    <property type="term" value="P:nicotinamide riboside biosynthetic process"/>
    <property type="evidence" value="ECO:0000318"/>
    <property type="project" value="GO_Central"/>
</dbReference>
<dbReference type="GO" id="GO:0071592">
    <property type="term" value="P:nicotinic acid riboside biosynthetic process"/>
    <property type="evidence" value="ECO:0000318"/>
    <property type="project" value="GO_Central"/>
</dbReference>
<dbReference type="GO" id="GO:0009117">
    <property type="term" value="P:nucleotide metabolic process"/>
    <property type="evidence" value="ECO:0007669"/>
    <property type="project" value="UniProtKB-KW"/>
</dbReference>
<dbReference type="InterPro" id="IPR036412">
    <property type="entry name" value="HAD-like_sf"/>
</dbReference>
<dbReference type="InterPro" id="IPR009453">
    <property type="entry name" value="ISN1"/>
</dbReference>
<dbReference type="PANTHER" id="PTHR28213">
    <property type="entry name" value="IMP-SPECIFIC 5'-NUCLEOTIDASE 1"/>
    <property type="match status" value="1"/>
</dbReference>
<dbReference type="PANTHER" id="PTHR28213:SF1">
    <property type="entry name" value="IMP-SPECIFIC 5'-NUCLEOTIDASE 1"/>
    <property type="match status" value="1"/>
</dbReference>
<dbReference type="Pfam" id="PF06437">
    <property type="entry name" value="ISN1"/>
    <property type="match status" value="1"/>
</dbReference>
<dbReference type="PIRSF" id="PIRSF028836">
    <property type="entry name" value="ISN1"/>
    <property type="match status" value="1"/>
</dbReference>
<dbReference type="SUPFAM" id="SSF56784">
    <property type="entry name" value="HAD-like"/>
    <property type="match status" value="1"/>
</dbReference>
<name>ISN1_EREGS</name>
<organism>
    <name type="scientific">Eremothecium gossypii (strain ATCC 10895 / CBS 109.51 / FGSC 9923 / NRRL Y-1056)</name>
    <name type="common">Yeast</name>
    <name type="synonym">Ashbya gossypii</name>
    <dbReference type="NCBI Taxonomy" id="284811"/>
    <lineage>
        <taxon>Eukaryota</taxon>
        <taxon>Fungi</taxon>
        <taxon>Dikarya</taxon>
        <taxon>Ascomycota</taxon>
        <taxon>Saccharomycotina</taxon>
        <taxon>Saccharomycetes</taxon>
        <taxon>Saccharomycetales</taxon>
        <taxon>Saccharomycetaceae</taxon>
        <taxon>Eremothecium</taxon>
    </lineage>
</organism>
<proteinExistence type="inferred from homology"/>
<sequence length="425" mass="48003">MSSRYRVEYQLKAHRKDAFIEWIKGLLAVPFVLHSVTERDNAQEKYRRVFEDVETLINEKITVDSDESLTRAAGVSRLDKLVPTIGTFFTPLPLTEAFLRQNARRAISERAYVSPSFNDIRHILNTAQIVQLARAGELSLVTFDGDVTLYEDGASLAAEDKVIGRLLRLLGAGMHVGIVTAAGYDDAENYERRLFGLLRRLERADLPNEAKRRLCVMGGESNFLFRCYERDGRAGFERVPESVWMSAELHQWNQQDINATLDLAEVMLRALREKLRLPAETQIIRKVRAVGIVPGQRFDPELGREIRVPLLRETLEEIVLTVQGRLENFPPAQRVQFSCFDGGSDVWCDIGGKDLGVAFLQRFYSPERPIRPEQSLHVGDQFAPVGSANDFKARLAGCTAWISSPQETVALLDDLLAELEAQKNM</sequence>